<evidence type="ECO:0000250" key="1"/>
<evidence type="ECO:0000255" key="2">
    <source>
        <dbReference type="PROSITE-ProRule" id="PRU00297"/>
    </source>
</evidence>
<evidence type="ECO:0000256" key="3">
    <source>
        <dbReference type="SAM" id="MobiDB-lite"/>
    </source>
</evidence>
<evidence type="ECO:0000305" key="4"/>
<keyword id="KW-0349">Heme</keyword>
<keyword id="KW-0408">Iron</keyword>
<keyword id="KW-0479">Metal-binding</keyword>
<keyword id="KW-0560">Oxidoreductase</keyword>
<keyword id="KW-0575">Peroxidase</keyword>
<keyword id="KW-1185">Reference proteome</keyword>
<name>CCPR2_DEBHA</name>
<sequence>MTAIQKPVVAKREAPKAEVNPTVSRSTQTETIKPTKERTVSVFSPPVFNFAANSFAQSVSNEYKHASPKRIKLDNSRVQVPSIVKPKQDKPRPPAIVTKPRVINIEFPNKQKSGFKLLIRPKHEPSIKKQKQGIEVLSTSNTKRITKSISVDDVEYVEKVKHAIKQVLPKPDYDDGSLGPVILRLAWHCCATYNKFTGNGGSNGSTMRFVPEITDDGNSGLDIARSALEPIKQKFPDITYSDLWTLAGKISIQEMGGPKIPWRCGRVDCIDDRYVPPNGRLPFAYKNANHIRETFGRMGFNDRETVSLLGAHGLGRCHKRFSGWEGKWTENPTSFSNDFYKVLLDEEWSLGTVPETGKEQYYNKDKSLIMLNTDIELIRDPHFLHFVKLYSQHQATFFQDFANAFGKLLELGIERDSNGNVLPKNEFY</sequence>
<protein>
    <recommendedName>
        <fullName>Putative heme-binding peroxidase</fullName>
        <ecNumber>1.11.1.-</ecNumber>
    </recommendedName>
</protein>
<comment type="function">
    <text evidence="1">Destroys radicals which are normally produced within the cells and which are toxic to biological systems.</text>
</comment>
<comment type="cofactor">
    <cofactor evidence="2">
        <name>heme b</name>
        <dbReference type="ChEBI" id="CHEBI:60344"/>
    </cofactor>
    <text evidence="2">Binds 1 heme b (iron(II)-protoporphyrin IX) group per subunit.</text>
</comment>
<comment type="similarity">
    <text evidence="4">Belongs to the peroxidase family. Cytochrome c peroxidase subfamily.</text>
</comment>
<comment type="sequence caution" evidence="4">
    <conflict type="erroneous initiation">
        <sequence resource="EMBL-CDS" id="CAG90546"/>
    </conflict>
</comment>
<organism>
    <name type="scientific">Debaryomyces hansenii (strain ATCC 36239 / CBS 767 / BCRC 21394 / JCM 1990 / NBRC 0083 / IGC 2968)</name>
    <name type="common">Yeast</name>
    <name type="synonym">Torulaspora hansenii</name>
    <dbReference type="NCBI Taxonomy" id="284592"/>
    <lineage>
        <taxon>Eukaryota</taxon>
        <taxon>Fungi</taxon>
        <taxon>Dikarya</taxon>
        <taxon>Ascomycota</taxon>
        <taxon>Saccharomycotina</taxon>
        <taxon>Pichiomycetes</taxon>
        <taxon>Debaryomycetaceae</taxon>
        <taxon>Debaryomyces</taxon>
    </lineage>
</organism>
<dbReference type="EC" id="1.11.1.-"/>
<dbReference type="EMBL" id="CR382139">
    <property type="protein sequence ID" value="CAG90546.2"/>
    <property type="status" value="ALT_INIT"/>
    <property type="molecule type" value="Genomic_DNA"/>
</dbReference>
<dbReference type="RefSeq" id="XP_462060.2">
    <property type="nucleotide sequence ID" value="XM_462060.1"/>
</dbReference>
<dbReference type="SMR" id="Q6BIB1"/>
<dbReference type="STRING" id="284592.Q6BIB1"/>
<dbReference type="PeroxiBase" id="2619">
    <property type="entry name" value="DhCcP01"/>
</dbReference>
<dbReference type="GeneID" id="2904971"/>
<dbReference type="KEGG" id="dha:DEHA2G12166g"/>
<dbReference type="eggNOG" id="ENOG502QR1E">
    <property type="taxonomic scope" value="Eukaryota"/>
</dbReference>
<dbReference type="HOGENOM" id="CLU_501624_0_0_1"/>
<dbReference type="InParanoid" id="Q6BIB1"/>
<dbReference type="OrthoDB" id="2859658at2759"/>
<dbReference type="Proteomes" id="UP000000599">
    <property type="component" value="Chromosome G"/>
</dbReference>
<dbReference type="GO" id="GO:0020037">
    <property type="term" value="F:heme binding"/>
    <property type="evidence" value="ECO:0007669"/>
    <property type="project" value="InterPro"/>
</dbReference>
<dbReference type="GO" id="GO:0046872">
    <property type="term" value="F:metal ion binding"/>
    <property type="evidence" value="ECO:0007669"/>
    <property type="project" value="UniProtKB-KW"/>
</dbReference>
<dbReference type="GO" id="GO:0004601">
    <property type="term" value="F:peroxidase activity"/>
    <property type="evidence" value="ECO:0007669"/>
    <property type="project" value="UniProtKB-KW"/>
</dbReference>
<dbReference type="GO" id="GO:0034599">
    <property type="term" value="P:cellular response to oxidative stress"/>
    <property type="evidence" value="ECO:0007669"/>
    <property type="project" value="InterPro"/>
</dbReference>
<dbReference type="GO" id="GO:0042744">
    <property type="term" value="P:hydrogen peroxide catabolic process"/>
    <property type="evidence" value="ECO:0007669"/>
    <property type="project" value="TreeGrafter"/>
</dbReference>
<dbReference type="GO" id="GO:0000302">
    <property type="term" value="P:response to reactive oxygen species"/>
    <property type="evidence" value="ECO:0007669"/>
    <property type="project" value="TreeGrafter"/>
</dbReference>
<dbReference type="CDD" id="cd00691">
    <property type="entry name" value="ascorbate_peroxidase"/>
    <property type="match status" value="1"/>
</dbReference>
<dbReference type="FunFam" id="1.10.520.10:FF:000005">
    <property type="entry name" value="Cytochrome c peroxidase"/>
    <property type="match status" value="1"/>
</dbReference>
<dbReference type="Gene3D" id="1.10.520.10">
    <property type="match status" value="1"/>
</dbReference>
<dbReference type="Gene3D" id="1.10.420.10">
    <property type="entry name" value="Peroxidase, domain 2"/>
    <property type="match status" value="1"/>
</dbReference>
<dbReference type="InterPro" id="IPR044831">
    <property type="entry name" value="Ccp1-like"/>
</dbReference>
<dbReference type="InterPro" id="IPR002016">
    <property type="entry name" value="Haem_peroxidase"/>
</dbReference>
<dbReference type="InterPro" id="IPR010255">
    <property type="entry name" value="Haem_peroxidase_sf"/>
</dbReference>
<dbReference type="InterPro" id="IPR002207">
    <property type="entry name" value="Peroxidase_I"/>
</dbReference>
<dbReference type="InterPro" id="IPR019794">
    <property type="entry name" value="Peroxidases_AS"/>
</dbReference>
<dbReference type="PANTHER" id="PTHR31356:SF36">
    <property type="entry name" value="L-ASCORBATE PEROXIDASE 3"/>
    <property type="match status" value="1"/>
</dbReference>
<dbReference type="PANTHER" id="PTHR31356">
    <property type="entry name" value="THYLAKOID LUMENAL 29 KDA PROTEIN, CHLOROPLASTIC-RELATED"/>
    <property type="match status" value="1"/>
</dbReference>
<dbReference type="Pfam" id="PF00141">
    <property type="entry name" value="peroxidase"/>
    <property type="match status" value="1"/>
</dbReference>
<dbReference type="PRINTS" id="PR00459">
    <property type="entry name" value="ASPEROXIDASE"/>
</dbReference>
<dbReference type="PRINTS" id="PR00458">
    <property type="entry name" value="PEROXIDASE"/>
</dbReference>
<dbReference type="SUPFAM" id="SSF48113">
    <property type="entry name" value="Heme-dependent peroxidases"/>
    <property type="match status" value="1"/>
</dbReference>
<dbReference type="PROSITE" id="PS00436">
    <property type="entry name" value="PEROXIDASE_2"/>
    <property type="match status" value="1"/>
</dbReference>
<dbReference type="PROSITE" id="PS50873">
    <property type="entry name" value="PEROXIDASE_4"/>
    <property type="match status" value="1"/>
</dbReference>
<feature type="chain" id="PRO_0000055586" description="Putative heme-binding peroxidase">
    <location>
        <begin position="1"/>
        <end position="428"/>
    </location>
</feature>
<feature type="region of interest" description="Disordered" evidence="3">
    <location>
        <begin position="1"/>
        <end position="33"/>
    </location>
</feature>
<feature type="compositionally biased region" description="Polar residues" evidence="3">
    <location>
        <begin position="21"/>
        <end position="32"/>
    </location>
</feature>
<feature type="active site" description="Proton acceptor">
    <location>
        <position position="188"/>
    </location>
</feature>
<feature type="active site" description="Tryptophan radical intermediate" evidence="1">
    <location>
        <position position="328"/>
    </location>
</feature>
<feature type="binding site" description="axial binding residue">
    <location>
        <position position="312"/>
    </location>
    <ligand>
        <name>heme b</name>
        <dbReference type="ChEBI" id="CHEBI:60344"/>
    </ligand>
    <ligandPart>
        <name>Fe</name>
        <dbReference type="ChEBI" id="CHEBI:18248"/>
    </ligandPart>
</feature>
<feature type="site" description="Transition state stabilizer" evidence="2">
    <location>
        <position position="184"/>
    </location>
</feature>
<proteinExistence type="inferred from homology"/>
<gene>
    <name type="ordered locus">DEHA2G12166g</name>
</gene>
<reference key="1">
    <citation type="journal article" date="2004" name="Nature">
        <title>Genome evolution in yeasts.</title>
        <authorList>
            <person name="Dujon B."/>
            <person name="Sherman D."/>
            <person name="Fischer G."/>
            <person name="Durrens P."/>
            <person name="Casaregola S."/>
            <person name="Lafontaine I."/>
            <person name="de Montigny J."/>
            <person name="Marck C."/>
            <person name="Neuveglise C."/>
            <person name="Talla E."/>
            <person name="Goffard N."/>
            <person name="Frangeul L."/>
            <person name="Aigle M."/>
            <person name="Anthouard V."/>
            <person name="Babour A."/>
            <person name="Barbe V."/>
            <person name="Barnay S."/>
            <person name="Blanchin S."/>
            <person name="Beckerich J.-M."/>
            <person name="Beyne E."/>
            <person name="Bleykasten C."/>
            <person name="Boisrame A."/>
            <person name="Boyer J."/>
            <person name="Cattolico L."/>
            <person name="Confanioleri F."/>
            <person name="de Daruvar A."/>
            <person name="Despons L."/>
            <person name="Fabre E."/>
            <person name="Fairhead C."/>
            <person name="Ferry-Dumazet H."/>
            <person name="Groppi A."/>
            <person name="Hantraye F."/>
            <person name="Hennequin C."/>
            <person name="Jauniaux N."/>
            <person name="Joyet P."/>
            <person name="Kachouri R."/>
            <person name="Kerrest A."/>
            <person name="Koszul R."/>
            <person name="Lemaire M."/>
            <person name="Lesur I."/>
            <person name="Ma L."/>
            <person name="Muller H."/>
            <person name="Nicaud J.-M."/>
            <person name="Nikolski M."/>
            <person name="Oztas S."/>
            <person name="Ozier-Kalogeropoulos O."/>
            <person name="Pellenz S."/>
            <person name="Potier S."/>
            <person name="Richard G.-F."/>
            <person name="Straub M.-L."/>
            <person name="Suleau A."/>
            <person name="Swennen D."/>
            <person name="Tekaia F."/>
            <person name="Wesolowski-Louvel M."/>
            <person name="Westhof E."/>
            <person name="Wirth B."/>
            <person name="Zeniou-Meyer M."/>
            <person name="Zivanovic Y."/>
            <person name="Bolotin-Fukuhara M."/>
            <person name="Thierry A."/>
            <person name="Bouchier C."/>
            <person name="Caudron B."/>
            <person name="Scarpelli C."/>
            <person name="Gaillardin C."/>
            <person name="Weissenbach J."/>
            <person name="Wincker P."/>
            <person name="Souciet J.-L."/>
        </authorList>
    </citation>
    <scope>NUCLEOTIDE SEQUENCE [LARGE SCALE GENOMIC DNA]</scope>
    <source>
        <strain>ATCC 36239 / CBS 767 / BCRC 21394 / JCM 1990 / NBRC 0083 / IGC 2968</strain>
    </source>
</reference>
<accession>Q6BIB1</accession>